<dbReference type="EMBL" id="AP008215">
    <property type="status" value="NOT_ANNOTATED_CDS"/>
    <property type="molecule type" value="Genomic_DNA"/>
</dbReference>
<dbReference type="EMBL" id="AP014965">
    <property type="status" value="NOT_ANNOTATED_CDS"/>
    <property type="molecule type" value="Genomic_DNA"/>
</dbReference>
<dbReference type="EMBL" id="CM000146">
    <property type="protein sequence ID" value="EAZ43938.1"/>
    <property type="status" value="ALT_SEQ"/>
    <property type="molecule type" value="Genomic_DNA"/>
</dbReference>
<dbReference type="SMR" id="A3BWJ9"/>
<dbReference type="FunCoup" id="A3BWJ9">
    <property type="interactions" value="281"/>
</dbReference>
<dbReference type="PaxDb" id="39947-A3BWJ9"/>
<dbReference type="HOGENOM" id="CLU_048643_5_2_1"/>
<dbReference type="InParanoid" id="A3BWJ9"/>
<dbReference type="Proteomes" id="UP000000763">
    <property type="component" value="Chromosome 9"/>
</dbReference>
<dbReference type="Proteomes" id="UP000007752">
    <property type="component" value="Chromosome 9"/>
</dbReference>
<dbReference type="Proteomes" id="UP000059680">
    <property type="component" value="Chromosome 9"/>
</dbReference>
<dbReference type="GO" id="GO:0016020">
    <property type="term" value="C:membrane"/>
    <property type="evidence" value="ECO:0000318"/>
    <property type="project" value="GO_Central"/>
</dbReference>
<dbReference type="GO" id="GO:0005886">
    <property type="term" value="C:plasma membrane"/>
    <property type="evidence" value="ECO:0000250"/>
    <property type="project" value="UniProtKB"/>
</dbReference>
<dbReference type="GO" id="GO:0051119">
    <property type="term" value="F:sugar transmembrane transporter activity"/>
    <property type="evidence" value="ECO:0000250"/>
    <property type="project" value="UniProtKB"/>
</dbReference>
<dbReference type="GO" id="GO:0008643">
    <property type="term" value="P:carbohydrate transport"/>
    <property type="evidence" value="ECO:0000318"/>
    <property type="project" value="GO_Central"/>
</dbReference>
<dbReference type="FunFam" id="1.20.1280.290:FF:000001">
    <property type="entry name" value="Bidirectional sugar transporter SWEET"/>
    <property type="match status" value="1"/>
</dbReference>
<dbReference type="FunFam" id="1.20.1280.290:FF:000002">
    <property type="entry name" value="Bidirectional sugar transporter SWEET"/>
    <property type="match status" value="1"/>
</dbReference>
<dbReference type="Gene3D" id="1.20.1280.290">
    <property type="match status" value="2"/>
</dbReference>
<dbReference type="InterPro" id="IPR047664">
    <property type="entry name" value="SWEET"/>
</dbReference>
<dbReference type="InterPro" id="IPR004316">
    <property type="entry name" value="SWEET_rpt"/>
</dbReference>
<dbReference type="PANTHER" id="PTHR10791">
    <property type="entry name" value="RAG1-ACTIVATING PROTEIN 1"/>
    <property type="match status" value="1"/>
</dbReference>
<dbReference type="PANTHER" id="PTHR10791:SF30">
    <property type="entry name" value="SUGAR TRANSPORTER SWEET1"/>
    <property type="match status" value="1"/>
</dbReference>
<dbReference type="Pfam" id="PF03083">
    <property type="entry name" value="MtN3_slv"/>
    <property type="match status" value="2"/>
</dbReference>
<gene>
    <name type="primary">SWEET7E</name>
    <name type="ordered locus">Os09g0256600</name>
    <name type="ordered locus">LOC_Os09g08270</name>
    <name type="ORF">OsJ_28561</name>
</gene>
<protein>
    <recommendedName>
        <fullName>Putative bidirectional sugar transporter SWEET7e</fullName>
        <shortName>OsSWEET7e</shortName>
    </recommendedName>
</protein>
<sequence length="256" mass="28238">MVSPDLIRNVVGIVGNAISFGLFLSPVLTFWRIIKEKDMKYFKADPYLATLLNCMLWVFYGLPIVHPNSILVVTINGIGLVIEAVYLTIFFLFSNKKNKKMGVVLATEALFMAAVALGVLLGAHTHQRRSLIVGILCVIFGTIMYSSPLTIMSQVVKTKSVEYMPLLLSVVSFLNGLCWTSYALIRFDIFITIPNGLGVLFTLMQLILDKNQDKNLELPTVAPVAKETSIVTPVSKDDDINGSTASHVIINITKEP</sequence>
<reference key="1">
    <citation type="journal article" date="2005" name="Nature">
        <title>The map-based sequence of the rice genome.</title>
        <authorList>
            <consortium name="International rice genome sequencing project (IRGSP)"/>
        </authorList>
    </citation>
    <scope>NUCLEOTIDE SEQUENCE [LARGE SCALE GENOMIC DNA]</scope>
    <source>
        <strain>cv. Nipponbare</strain>
    </source>
</reference>
<reference key="2">
    <citation type="journal article" date="2008" name="Nucleic Acids Res.">
        <title>The rice annotation project database (RAP-DB): 2008 update.</title>
        <authorList>
            <consortium name="The rice annotation project (RAP)"/>
        </authorList>
    </citation>
    <scope>GENOME REANNOTATION</scope>
    <source>
        <strain>cv. Nipponbare</strain>
    </source>
</reference>
<reference key="3">
    <citation type="journal article" date="2013" name="Rice">
        <title>Improvement of the Oryza sativa Nipponbare reference genome using next generation sequence and optical map data.</title>
        <authorList>
            <person name="Kawahara Y."/>
            <person name="de la Bastide M."/>
            <person name="Hamilton J.P."/>
            <person name="Kanamori H."/>
            <person name="McCombie W.R."/>
            <person name="Ouyang S."/>
            <person name="Schwartz D.C."/>
            <person name="Tanaka T."/>
            <person name="Wu J."/>
            <person name="Zhou S."/>
            <person name="Childs K.L."/>
            <person name="Davidson R.M."/>
            <person name="Lin H."/>
            <person name="Quesada-Ocampo L."/>
            <person name="Vaillancourt B."/>
            <person name="Sakai H."/>
            <person name="Lee S.S."/>
            <person name="Kim J."/>
            <person name="Numa H."/>
            <person name="Itoh T."/>
            <person name="Buell C.R."/>
            <person name="Matsumoto T."/>
        </authorList>
    </citation>
    <scope>GENOME REANNOTATION</scope>
    <source>
        <strain>cv. Nipponbare</strain>
    </source>
</reference>
<reference key="4">
    <citation type="journal article" date="2005" name="PLoS Biol.">
        <title>The genomes of Oryza sativa: a history of duplications.</title>
        <authorList>
            <person name="Yu J."/>
            <person name="Wang J."/>
            <person name="Lin W."/>
            <person name="Li S."/>
            <person name="Li H."/>
            <person name="Zhou J."/>
            <person name="Ni P."/>
            <person name="Dong W."/>
            <person name="Hu S."/>
            <person name="Zeng C."/>
            <person name="Zhang J."/>
            <person name="Zhang Y."/>
            <person name="Li R."/>
            <person name="Xu Z."/>
            <person name="Li S."/>
            <person name="Li X."/>
            <person name="Zheng H."/>
            <person name="Cong L."/>
            <person name="Lin L."/>
            <person name="Yin J."/>
            <person name="Geng J."/>
            <person name="Li G."/>
            <person name="Shi J."/>
            <person name="Liu J."/>
            <person name="Lv H."/>
            <person name="Li J."/>
            <person name="Wang J."/>
            <person name="Deng Y."/>
            <person name="Ran L."/>
            <person name="Shi X."/>
            <person name="Wang X."/>
            <person name="Wu Q."/>
            <person name="Li C."/>
            <person name="Ren X."/>
            <person name="Wang J."/>
            <person name="Wang X."/>
            <person name="Li D."/>
            <person name="Liu D."/>
            <person name="Zhang X."/>
            <person name="Ji Z."/>
            <person name="Zhao W."/>
            <person name="Sun Y."/>
            <person name="Zhang Z."/>
            <person name="Bao J."/>
            <person name="Han Y."/>
            <person name="Dong L."/>
            <person name="Ji J."/>
            <person name="Chen P."/>
            <person name="Wu S."/>
            <person name="Liu J."/>
            <person name="Xiao Y."/>
            <person name="Bu D."/>
            <person name="Tan J."/>
            <person name="Yang L."/>
            <person name="Ye C."/>
            <person name="Zhang J."/>
            <person name="Xu J."/>
            <person name="Zhou Y."/>
            <person name="Yu Y."/>
            <person name="Zhang B."/>
            <person name="Zhuang S."/>
            <person name="Wei H."/>
            <person name="Liu B."/>
            <person name="Lei M."/>
            <person name="Yu H."/>
            <person name="Li Y."/>
            <person name="Xu H."/>
            <person name="Wei S."/>
            <person name="He X."/>
            <person name="Fang L."/>
            <person name="Zhang Z."/>
            <person name="Zhang Y."/>
            <person name="Huang X."/>
            <person name="Su Z."/>
            <person name="Tong W."/>
            <person name="Li J."/>
            <person name="Tong Z."/>
            <person name="Li S."/>
            <person name="Ye J."/>
            <person name="Wang L."/>
            <person name="Fang L."/>
            <person name="Lei T."/>
            <person name="Chen C.-S."/>
            <person name="Chen H.-C."/>
            <person name="Xu Z."/>
            <person name="Li H."/>
            <person name="Huang H."/>
            <person name="Zhang F."/>
            <person name="Xu H."/>
            <person name="Li N."/>
            <person name="Zhao C."/>
            <person name="Li S."/>
            <person name="Dong L."/>
            <person name="Huang Y."/>
            <person name="Li L."/>
            <person name="Xi Y."/>
            <person name="Qi Q."/>
            <person name="Li W."/>
            <person name="Zhang B."/>
            <person name="Hu W."/>
            <person name="Zhang Y."/>
            <person name="Tian X."/>
            <person name="Jiao Y."/>
            <person name="Liang X."/>
            <person name="Jin J."/>
            <person name="Gao L."/>
            <person name="Zheng W."/>
            <person name="Hao B."/>
            <person name="Liu S.-M."/>
            <person name="Wang W."/>
            <person name="Yuan L."/>
            <person name="Cao M."/>
            <person name="McDermott J."/>
            <person name="Samudrala R."/>
            <person name="Wang J."/>
            <person name="Wong G.K.-S."/>
            <person name="Yang H."/>
        </authorList>
    </citation>
    <scope>NUCLEOTIDE SEQUENCE [LARGE SCALE GENOMIC DNA]</scope>
    <source>
        <strain>cv. Nipponbare</strain>
    </source>
</reference>
<reference key="5">
    <citation type="journal article" date="2010" name="Nature">
        <title>Sugar transporters for intercellular exchange and nutrition of pathogens.</title>
        <authorList>
            <person name="Chen L.-Q."/>
            <person name="Hou B.-H."/>
            <person name="Lalonde S."/>
            <person name="Takanaga H."/>
            <person name="Hartung M.L."/>
            <person name="Qu X.-Q."/>
            <person name="Guo W.-J."/>
            <person name="Kim J.-G."/>
            <person name="Underwood W."/>
            <person name="Chaudhuri B."/>
            <person name="Chermak D."/>
            <person name="Antony G."/>
            <person name="White F.F."/>
            <person name="Somerville S.C."/>
            <person name="Mudgett M.B."/>
            <person name="Frommer W.B."/>
        </authorList>
    </citation>
    <scope>GENE FAMILY</scope>
    <scope>NOMENCLATURE</scope>
</reference>
<comment type="function">
    <text evidence="1">Mediates both low-affinity uptake and efflux of sugar across the plasma membrane.</text>
</comment>
<comment type="subunit">
    <text evidence="1">Forms homooligomers and/or heterooligomers.</text>
</comment>
<comment type="subcellular location">
    <subcellularLocation>
        <location evidence="1">Cell membrane</location>
        <topology evidence="1">Multi-pass membrane protein</topology>
    </subcellularLocation>
</comment>
<comment type="similarity">
    <text evidence="3">Belongs to the SWEET sugar transporter family.</text>
</comment>
<comment type="sequence caution" evidence="3">
    <conflict type="erroneous gene model prediction">
        <sequence resource="EMBL-CDS" id="EAZ43938"/>
    </conflict>
</comment>
<proteinExistence type="inferred from homology"/>
<feature type="chain" id="PRO_0000404132" description="Putative bidirectional sugar transporter SWEET7e">
    <location>
        <begin position="1"/>
        <end position="256"/>
    </location>
</feature>
<feature type="topological domain" description="Extracellular" evidence="3">
    <location>
        <begin position="1"/>
        <end position="9"/>
    </location>
</feature>
<feature type="transmembrane region" description="Helical; Name=1" evidence="2">
    <location>
        <begin position="10"/>
        <end position="30"/>
    </location>
</feature>
<feature type="topological domain" description="Cytoplasmic" evidence="3">
    <location>
        <begin position="31"/>
        <end position="45"/>
    </location>
</feature>
<feature type="transmembrane region" description="Helical; Name=2" evidence="2">
    <location>
        <begin position="46"/>
        <end position="66"/>
    </location>
</feature>
<feature type="topological domain" description="Extracellular" evidence="3">
    <location>
        <begin position="67"/>
        <end position="69"/>
    </location>
</feature>
<feature type="transmembrane region" description="Helical; Name=3" evidence="2">
    <location>
        <begin position="70"/>
        <end position="90"/>
    </location>
</feature>
<feature type="topological domain" description="Cytoplasmic" evidence="3">
    <location>
        <begin position="91"/>
        <end position="100"/>
    </location>
</feature>
<feature type="transmembrane region" description="Helical; Name=4" evidence="2">
    <location>
        <begin position="101"/>
        <end position="121"/>
    </location>
</feature>
<feature type="topological domain" description="Extracellular" evidence="3">
    <location>
        <begin position="122"/>
        <end position="130"/>
    </location>
</feature>
<feature type="transmembrane region" description="Helical; Name=5" evidence="2">
    <location>
        <begin position="131"/>
        <end position="151"/>
    </location>
</feature>
<feature type="topological domain" description="Cytoplasmic" evidence="3">
    <location>
        <begin position="152"/>
        <end position="164"/>
    </location>
</feature>
<feature type="transmembrane region" description="Helical; Name=6" evidence="2">
    <location>
        <begin position="165"/>
        <end position="185"/>
    </location>
</feature>
<feature type="topological domain" description="Extracellular" evidence="3">
    <location>
        <position position="186"/>
    </location>
</feature>
<feature type="transmembrane region" description="Helical; Name=7" evidence="2">
    <location>
        <begin position="187"/>
        <end position="207"/>
    </location>
</feature>
<feature type="topological domain" description="Cytoplasmic" evidence="3">
    <location>
        <begin position="208"/>
        <end position="256"/>
    </location>
</feature>
<feature type="domain" description="MtN3/slv 1" evidence="3">
    <location>
        <begin position="10"/>
        <end position="97"/>
    </location>
</feature>
<feature type="domain" description="MtN3/slv 2" evidence="3">
    <location>
        <begin position="133"/>
        <end position="212"/>
    </location>
</feature>
<keyword id="KW-1003">Cell membrane</keyword>
<keyword id="KW-0472">Membrane</keyword>
<keyword id="KW-1185">Reference proteome</keyword>
<keyword id="KW-0677">Repeat</keyword>
<keyword id="KW-0762">Sugar transport</keyword>
<keyword id="KW-0812">Transmembrane</keyword>
<keyword id="KW-1133">Transmembrane helix</keyword>
<keyword id="KW-0813">Transport</keyword>
<organism>
    <name type="scientific">Oryza sativa subsp. japonica</name>
    <name type="common">Rice</name>
    <dbReference type="NCBI Taxonomy" id="39947"/>
    <lineage>
        <taxon>Eukaryota</taxon>
        <taxon>Viridiplantae</taxon>
        <taxon>Streptophyta</taxon>
        <taxon>Embryophyta</taxon>
        <taxon>Tracheophyta</taxon>
        <taxon>Spermatophyta</taxon>
        <taxon>Magnoliopsida</taxon>
        <taxon>Liliopsida</taxon>
        <taxon>Poales</taxon>
        <taxon>Poaceae</taxon>
        <taxon>BOP clade</taxon>
        <taxon>Oryzoideae</taxon>
        <taxon>Oryzeae</taxon>
        <taxon>Oryzinae</taxon>
        <taxon>Oryza</taxon>
        <taxon>Oryza sativa</taxon>
    </lineage>
</organism>
<name>SWT7E_ORYSJ</name>
<accession>A3BWJ9</accession>
<evidence type="ECO:0000250" key="1">
    <source>
        <dbReference type="UniProtKB" id="Q8L9J7"/>
    </source>
</evidence>
<evidence type="ECO:0000255" key="2"/>
<evidence type="ECO:0000305" key="3"/>